<dbReference type="EC" id="6.5.1.2" evidence="1"/>
<dbReference type="EMBL" id="CP000139">
    <property type="protein sequence ID" value="ABR40932.1"/>
    <property type="molecule type" value="Genomic_DNA"/>
</dbReference>
<dbReference type="RefSeq" id="WP_005852506.1">
    <property type="nucleotide sequence ID" value="NZ_CAXUIZ010000039.1"/>
</dbReference>
<dbReference type="SMR" id="A6L5G8"/>
<dbReference type="STRING" id="435590.BVU_3306"/>
<dbReference type="PaxDb" id="435590-BVU_3306"/>
<dbReference type="GeneID" id="5304267"/>
<dbReference type="KEGG" id="bvu:BVU_3306"/>
<dbReference type="eggNOG" id="COG0272">
    <property type="taxonomic scope" value="Bacteria"/>
</dbReference>
<dbReference type="HOGENOM" id="CLU_007764_2_0_10"/>
<dbReference type="BioCyc" id="BVUL435590:G1G59-3429-MONOMER"/>
<dbReference type="Proteomes" id="UP000002861">
    <property type="component" value="Chromosome"/>
</dbReference>
<dbReference type="GO" id="GO:0005829">
    <property type="term" value="C:cytosol"/>
    <property type="evidence" value="ECO:0007669"/>
    <property type="project" value="TreeGrafter"/>
</dbReference>
<dbReference type="GO" id="GO:0003677">
    <property type="term" value="F:DNA binding"/>
    <property type="evidence" value="ECO:0007669"/>
    <property type="project" value="InterPro"/>
</dbReference>
<dbReference type="GO" id="GO:0003911">
    <property type="term" value="F:DNA ligase (NAD+) activity"/>
    <property type="evidence" value="ECO:0007669"/>
    <property type="project" value="UniProtKB-UniRule"/>
</dbReference>
<dbReference type="GO" id="GO:0046872">
    <property type="term" value="F:metal ion binding"/>
    <property type="evidence" value="ECO:0007669"/>
    <property type="project" value="UniProtKB-KW"/>
</dbReference>
<dbReference type="GO" id="GO:0006281">
    <property type="term" value="P:DNA repair"/>
    <property type="evidence" value="ECO:0007669"/>
    <property type="project" value="UniProtKB-KW"/>
</dbReference>
<dbReference type="GO" id="GO:0006260">
    <property type="term" value="P:DNA replication"/>
    <property type="evidence" value="ECO:0007669"/>
    <property type="project" value="UniProtKB-KW"/>
</dbReference>
<dbReference type="CDD" id="cd17748">
    <property type="entry name" value="BRCT_DNA_ligase_like"/>
    <property type="match status" value="1"/>
</dbReference>
<dbReference type="CDD" id="cd00114">
    <property type="entry name" value="LIGANc"/>
    <property type="match status" value="1"/>
</dbReference>
<dbReference type="FunFam" id="1.10.150.20:FF:000006">
    <property type="entry name" value="DNA ligase"/>
    <property type="match status" value="1"/>
</dbReference>
<dbReference type="FunFam" id="1.10.150.20:FF:000007">
    <property type="entry name" value="DNA ligase"/>
    <property type="match status" value="1"/>
</dbReference>
<dbReference type="FunFam" id="1.10.287.610:FF:000002">
    <property type="entry name" value="DNA ligase"/>
    <property type="match status" value="1"/>
</dbReference>
<dbReference type="FunFam" id="2.40.50.140:FF:000012">
    <property type="entry name" value="DNA ligase"/>
    <property type="match status" value="1"/>
</dbReference>
<dbReference type="FunFam" id="3.30.470.30:FF:000001">
    <property type="entry name" value="DNA ligase"/>
    <property type="match status" value="1"/>
</dbReference>
<dbReference type="FunFam" id="6.20.10.30:FF:000005">
    <property type="entry name" value="DNA ligase"/>
    <property type="match status" value="1"/>
</dbReference>
<dbReference type="Gene3D" id="6.20.10.30">
    <property type="match status" value="1"/>
</dbReference>
<dbReference type="Gene3D" id="1.10.150.20">
    <property type="entry name" value="5' to 3' exonuclease, C-terminal subdomain"/>
    <property type="match status" value="2"/>
</dbReference>
<dbReference type="Gene3D" id="3.40.50.10190">
    <property type="entry name" value="BRCT domain"/>
    <property type="match status" value="1"/>
</dbReference>
<dbReference type="Gene3D" id="3.30.470.30">
    <property type="entry name" value="DNA ligase/mRNA capping enzyme"/>
    <property type="match status" value="1"/>
</dbReference>
<dbReference type="Gene3D" id="1.10.287.610">
    <property type="entry name" value="Helix hairpin bin"/>
    <property type="match status" value="1"/>
</dbReference>
<dbReference type="Gene3D" id="2.40.50.140">
    <property type="entry name" value="Nucleic acid-binding proteins"/>
    <property type="match status" value="1"/>
</dbReference>
<dbReference type="HAMAP" id="MF_01588">
    <property type="entry name" value="DNA_ligase_A"/>
    <property type="match status" value="1"/>
</dbReference>
<dbReference type="InterPro" id="IPR001357">
    <property type="entry name" value="BRCT_dom"/>
</dbReference>
<dbReference type="InterPro" id="IPR036420">
    <property type="entry name" value="BRCT_dom_sf"/>
</dbReference>
<dbReference type="InterPro" id="IPR041663">
    <property type="entry name" value="DisA/LigA_HHH"/>
</dbReference>
<dbReference type="InterPro" id="IPR001679">
    <property type="entry name" value="DNA_ligase"/>
</dbReference>
<dbReference type="InterPro" id="IPR033136">
    <property type="entry name" value="DNA_ligase_CS"/>
</dbReference>
<dbReference type="InterPro" id="IPR013839">
    <property type="entry name" value="DNAligase_adenylation"/>
</dbReference>
<dbReference type="InterPro" id="IPR013840">
    <property type="entry name" value="DNAligase_N"/>
</dbReference>
<dbReference type="InterPro" id="IPR003583">
    <property type="entry name" value="Hlx-hairpin-Hlx_DNA-bd_motif"/>
</dbReference>
<dbReference type="InterPro" id="IPR012340">
    <property type="entry name" value="NA-bd_OB-fold"/>
</dbReference>
<dbReference type="InterPro" id="IPR004150">
    <property type="entry name" value="NAD_DNA_ligase_OB"/>
</dbReference>
<dbReference type="InterPro" id="IPR010994">
    <property type="entry name" value="RuvA_2-like"/>
</dbReference>
<dbReference type="InterPro" id="IPR004149">
    <property type="entry name" value="Znf_DNAligase_C4"/>
</dbReference>
<dbReference type="NCBIfam" id="TIGR00575">
    <property type="entry name" value="dnlj"/>
    <property type="match status" value="1"/>
</dbReference>
<dbReference type="NCBIfam" id="NF005932">
    <property type="entry name" value="PRK07956.1"/>
    <property type="match status" value="1"/>
</dbReference>
<dbReference type="PANTHER" id="PTHR23389">
    <property type="entry name" value="CHROMOSOME TRANSMISSION FIDELITY FACTOR 18"/>
    <property type="match status" value="1"/>
</dbReference>
<dbReference type="PANTHER" id="PTHR23389:SF9">
    <property type="entry name" value="DNA LIGASE"/>
    <property type="match status" value="1"/>
</dbReference>
<dbReference type="Pfam" id="PF00533">
    <property type="entry name" value="BRCT"/>
    <property type="match status" value="1"/>
</dbReference>
<dbReference type="Pfam" id="PF01653">
    <property type="entry name" value="DNA_ligase_aden"/>
    <property type="match status" value="1"/>
</dbReference>
<dbReference type="Pfam" id="PF03120">
    <property type="entry name" value="DNA_ligase_OB"/>
    <property type="match status" value="1"/>
</dbReference>
<dbReference type="Pfam" id="PF03119">
    <property type="entry name" value="DNA_ligase_ZBD"/>
    <property type="match status" value="1"/>
</dbReference>
<dbReference type="Pfam" id="PF12826">
    <property type="entry name" value="HHH_2"/>
    <property type="match status" value="1"/>
</dbReference>
<dbReference type="Pfam" id="PF14520">
    <property type="entry name" value="HHH_5"/>
    <property type="match status" value="1"/>
</dbReference>
<dbReference type="Pfam" id="PF22745">
    <property type="entry name" value="Nlig-Ia"/>
    <property type="match status" value="1"/>
</dbReference>
<dbReference type="PIRSF" id="PIRSF001604">
    <property type="entry name" value="LigA"/>
    <property type="match status" value="1"/>
</dbReference>
<dbReference type="SMART" id="SM00292">
    <property type="entry name" value="BRCT"/>
    <property type="match status" value="1"/>
</dbReference>
<dbReference type="SMART" id="SM00278">
    <property type="entry name" value="HhH1"/>
    <property type="match status" value="3"/>
</dbReference>
<dbReference type="SMART" id="SM00532">
    <property type="entry name" value="LIGANc"/>
    <property type="match status" value="1"/>
</dbReference>
<dbReference type="SUPFAM" id="SSF52113">
    <property type="entry name" value="BRCT domain"/>
    <property type="match status" value="1"/>
</dbReference>
<dbReference type="SUPFAM" id="SSF56091">
    <property type="entry name" value="DNA ligase/mRNA capping enzyme, catalytic domain"/>
    <property type="match status" value="1"/>
</dbReference>
<dbReference type="SUPFAM" id="SSF50249">
    <property type="entry name" value="Nucleic acid-binding proteins"/>
    <property type="match status" value="1"/>
</dbReference>
<dbReference type="SUPFAM" id="SSF47781">
    <property type="entry name" value="RuvA domain 2-like"/>
    <property type="match status" value="1"/>
</dbReference>
<dbReference type="PROSITE" id="PS50172">
    <property type="entry name" value="BRCT"/>
    <property type="match status" value="1"/>
</dbReference>
<dbReference type="PROSITE" id="PS01056">
    <property type="entry name" value="DNA_LIGASE_N2"/>
    <property type="match status" value="1"/>
</dbReference>
<reference key="1">
    <citation type="journal article" date="2007" name="PLoS Biol.">
        <title>Evolution of symbiotic bacteria in the distal human intestine.</title>
        <authorList>
            <person name="Xu J."/>
            <person name="Mahowald M.A."/>
            <person name="Ley R.E."/>
            <person name="Lozupone C.A."/>
            <person name="Hamady M."/>
            <person name="Martens E.C."/>
            <person name="Henrissat B."/>
            <person name="Coutinho P.M."/>
            <person name="Minx P."/>
            <person name="Latreille P."/>
            <person name="Cordum H."/>
            <person name="Van Brunt A."/>
            <person name="Kim K."/>
            <person name="Fulton R.S."/>
            <person name="Fulton L.A."/>
            <person name="Clifton S.W."/>
            <person name="Wilson R.K."/>
            <person name="Knight R.D."/>
            <person name="Gordon J.I."/>
        </authorList>
    </citation>
    <scope>NUCLEOTIDE SEQUENCE [LARGE SCALE GENOMIC DNA]</scope>
    <source>
        <strain>ATCC 8482 / DSM 1447 / JCM 5826 / CCUG 4940 / NBRC 14291 / NCTC 11154</strain>
    </source>
</reference>
<comment type="function">
    <text evidence="1">DNA ligase that catalyzes the formation of phosphodiester linkages between 5'-phosphoryl and 3'-hydroxyl groups in double-stranded DNA using NAD as a coenzyme and as the energy source for the reaction. It is essential for DNA replication and repair of damaged DNA.</text>
</comment>
<comment type="catalytic activity">
    <reaction evidence="1">
        <text>NAD(+) + (deoxyribonucleotide)n-3'-hydroxyl + 5'-phospho-(deoxyribonucleotide)m = (deoxyribonucleotide)n+m + AMP + beta-nicotinamide D-nucleotide.</text>
        <dbReference type="EC" id="6.5.1.2"/>
    </reaction>
</comment>
<comment type="cofactor">
    <cofactor evidence="1">
        <name>Mg(2+)</name>
        <dbReference type="ChEBI" id="CHEBI:18420"/>
    </cofactor>
    <cofactor evidence="1">
        <name>Mn(2+)</name>
        <dbReference type="ChEBI" id="CHEBI:29035"/>
    </cofactor>
</comment>
<comment type="similarity">
    <text evidence="1">Belongs to the NAD-dependent DNA ligase family. LigA subfamily.</text>
</comment>
<sequence length="665" mass="75172">MTEIERIDQLREELHRHNYNYYVLNAPEITDQEFDKLMRELQDLEEKHPEHRDENSPSMRVGSDINKNFTQVVHKYPMLSLANTYSETEVTEFYDRVKKSLNEDFEICCEMKYDGTSISLTYENGKLVRAVTRGDGVQGDDVTGNVKTIRSIPLVLHGKGYPETFEIRGEILMPWVVFEELNKEREAREEPLFANPRNAASGTLKLQNSAIVASRKLDAYLYYLLGDNLPCDGHYENLKEAEKWGFKISDLTRKCKTLQEVFDFIKYWDVERKNLPVATDGIVLKVNSLRQQRNLGFTAKSPRWAIAYKFQAEQALTRLNKVTYQVGRTGAVTPVANLDPIQLSGTVVKRASLHNADIIEGLDLHIGDMVYVEKGGEIIPKIVGVDKDARIMIGDKVKFITHCPECGSKLVRYEGEAAYYCTNDAACPPQIKGKIEHFISRRAMNIDGLGPETVDQFYQEGLIRDVADLYTLKTSDIINLERMGEKSAENIIKGIEQSKEVPFERVLFALGIRFVGETVAKKVAKSFKSMDALADASLDNLIHVDEIGEKIAQSILLYFANPKNRDIIERLRVAGVRLEADEEDTSEHTDKLAGKSIVISGVFAHHSRDEYKELIEKHGGKNVGSISSKTSFILAGDNMGPSKLEKAQKLGVTIVSEEEFLQMIE</sequence>
<gene>
    <name evidence="1" type="primary">ligA</name>
    <name type="ordered locus">BVU_3306</name>
</gene>
<protein>
    <recommendedName>
        <fullName evidence="1">DNA ligase</fullName>
        <ecNumber evidence="1">6.5.1.2</ecNumber>
    </recommendedName>
    <alternativeName>
        <fullName evidence="1">Polydeoxyribonucleotide synthase [NAD(+)]</fullName>
    </alternativeName>
</protein>
<feature type="chain" id="PRO_0000313133" description="DNA ligase">
    <location>
        <begin position="1"/>
        <end position="665"/>
    </location>
</feature>
<feature type="domain" description="BRCT" evidence="1">
    <location>
        <begin position="587"/>
        <end position="665"/>
    </location>
</feature>
<feature type="active site" description="N6-AMP-lysine intermediate" evidence="1">
    <location>
        <position position="112"/>
    </location>
</feature>
<feature type="binding site" evidence="1">
    <location>
        <begin position="31"/>
        <end position="35"/>
    </location>
    <ligand>
        <name>NAD(+)</name>
        <dbReference type="ChEBI" id="CHEBI:57540"/>
    </ligand>
</feature>
<feature type="binding site" evidence="1">
    <location>
        <begin position="80"/>
        <end position="81"/>
    </location>
    <ligand>
        <name>NAD(+)</name>
        <dbReference type="ChEBI" id="CHEBI:57540"/>
    </ligand>
</feature>
<feature type="binding site" evidence="1">
    <location>
        <position position="110"/>
    </location>
    <ligand>
        <name>NAD(+)</name>
        <dbReference type="ChEBI" id="CHEBI:57540"/>
    </ligand>
</feature>
<feature type="binding site" evidence="1">
    <location>
        <position position="133"/>
    </location>
    <ligand>
        <name>NAD(+)</name>
        <dbReference type="ChEBI" id="CHEBI:57540"/>
    </ligand>
</feature>
<feature type="binding site" evidence="1">
    <location>
        <position position="170"/>
    </location>
    <ligand>
        <name>NAD(+)</name>
        <dbReference type="ChEBI" id="CHEBI:57540"/>
    </ligand>
</feature>
<feature type="binding site" evidence="1">
    <location>
        <position position="285"/>
    </location>
    <ligand>
        <name>NAD(+)</name>
        <dbReference type="ChEBI" id="CHEBI:57540"/>
    </ligand>
</feature>
<feature type="binding site" evidence="1">
    <location>
        <position position="309"/>
    </location>
    <ligand>
        <name>NAD(+)</name>
        <dbReference type="ChEBI" id="CHEBI:57540"/>
    </ligand>
</feature>
<feature type="binding site" evidence="1">
    <location>
        <position position="403"/>
    </location>
    <ligand>
        <name>Zn(2+)</name>
        <dbReference type="ChEBI" id="CHEBI:29105"/>
    </ligand>
</feature>
<feature type="binding site" evidence="1">
    <location>
        <position position="406"/>
    </location>
    <ligand>
        <name>Zn(2+)</name>
        <dbReference type="ChEBI" id="CHEBI:29105"/>
    </ligand>
</feature>
<feature type="binding site" evidence="1">
    <location>
        <position position="421"/>
    </location>
    <ligand>
        <name>Zn(2+)</name>
        <dbReference type="ChEBI" id="CHEBI:29105"/>
    </ligand>
</feature>
<feature type="binding site" evidence="1">
    <location>
        <position position="427"/>
    </location>
    <ligand>
        <name>Zn(2+)</name>
        <dbReference type="ChEBI" id="CHEBI:29105"/>
    </ligand>
</feature>
<name>DNLJ_PHOV8</name>
<accession>A6L5G8</accession>
<keyword id="KW-0227">DNA damage</keyword>
<keyword id="KW-0234">DNA repair</keyword>
<keyword id="KW-0235">DNA replication</keyword>
<keyword id="KW-0436">Ligase</keyword>
<keyword id="KW-0460">Magnesium</keyword>
<keyword id="KW-0464">Manganese</keyword>
<keyword id="KW-0479">Metal-binding</keyword>
<keyword id="KW-0520">NAD</keyword>
<keyword id="KW-0862">Zinc</keyword>
<evidence type="ECO:0000255" key="1">
    <source>
        <dbReference type="HAMAP-Rule" id="MF_01588"/>
    </source>
</evidence>
<proteinExistence type="inferred from homology"/>
<organism>
    <name type="scientific">Phocaeicola vulgatus (strain ATCC 8482 / DSM 1447 / JCM 5826 / CCUG 4940 / NBRC 14291 / NCTC 11154)</name>
    <name type="common">Bacteroides vulgatus</name>
    <dbReference type="NCBI Taxonomy" id="435590"/>
    <lineage>
        <taxon>Bacteria</taxon>
        <taxon>Pseudomonadati</taxon>
        <taxon>Bacteroidota</taxon>
        <taxon>Bacteroidia</taxon>
        <taxon>Bacteroidales</taxon>
        <taxon>Bacteroidaceae</taxon>
        <taxon>Phocaeicola</taxon>
    </lineage>
</organism>